<keyword id="KW-0436">Ligase</keyword>
<keyword id="KW-0511">Multifunctional enzyme</keyword>
<keyword id="KW-0596">Phosphopantetheine</keyword>
<keyword id="KW-0597">Phosphoprotein</keyword>
<keyword id="KW-0677">Repeat</keyword>
<name>FSO1_OMPOL</name>
<comment type="function">
    <text evidence="4">Nonribosomal peptide synthetase; part of the siderophore biosynthetic pathway (PubMed:16019163). Omphalotus olearius produces ferrichrome A, but no other siderophore has been detected (PubMed:16019163). Ferrichrome A consists of a hexapeptide ring made up of one glycine, two serine, and three N(5)-hydroxyornithine amino acid residues, the latter acylated by trans-(alpha-methyl)-glutaconic acid residues (PubMed:16019163). The biosynthesis of ferrichrome A depends on the hydroxylation of ornithine to N(5)-hydroxyornithine, catalyzed by the monooxygenase omo1 (PubMed:16019163). The second step, the acylation of N(5)-hydroxy-L-ornithine is probably catalyzed by the N-acyltransferase ato1 (PubMed:16019163). Finally, assembly of ferrichrome A is catalyzed by the nonribosomal peptide synthase (NRPS) fso1 (PubMed:16019163).</text>
</comment>
<comment type="pathway">
    <text evidence="7">Siderophore biosynthesis; ferrichrome biosynthesis.</text>
</comment>
<comment type="induction">
    <text evidence="4">Expression is iduced under iron-depleted conditions (PubMed:16019163).</text>
</comment>
<comment type="domain">
    <text evidence="1 7 8">NRP synthetases are composed of discrete domains (adenylation (A), thiolation (T) or peptidyl carrier protein (PCP) and condensation (C) domains) which when grouped together are referred to as a single module (By similarity). Each module is responsible for the recognition (via the A domain) and incorporation of a single amino acid into the growing peptide product (By similarity). Thus, an NRP synthetase is generally composed of one or more modules and can terminate in a thioesterase domain (TE) that releases the newly synthesized peptide from the enzyme (By similarity). Occasionally, methyltransferase domains (responsible for amino acid methylation) are present within the NRP synthetase (By similarity). Fso1 has the following architecture: A-T-C-A-T-C-A-T-C-T-C-T-C (PubMed:16019163, PubMed:16502473).</text>
</comment>
<comment type="similarity">
    <text evidence="6">Belongs to the NRP synthetase family.</text>
</comment>
<evidence type="ECO:0000250" key="1">
    <source>
        <dbReference type="UniProtKB" id="A0A144KPJ6"/>
    </source>
</evidence>
<evidence type="ECO:0000255" key="2"/>
<evidence type="ECO:0000255" key="3">
    <source>
        <dbReference type="PROSITE-ProRule" id="PRU00258"/>
    </source>
</evidence>
<evidence type="ECO:0000269" key="4">
    <source>
    </source>
</evidence>
<evidence type="ECO:0000303" key="5">
    <source>
    </source>
</evidence>
<evidence type="ECO:0000305" key="6"/>
<evidence type="ECO:0000305" key="7">
    <source>
    </source>
</evidence>
<evidence type="ECO:0000305" key="8">
    <source>
    </source>
</evidence>
<reference key="1">
    <citation type="journal article" date="2005" name="FEMS Microbiol. Lett.">
        <title>Characterization of the ferrichrome A biosynthetic gene cluster in the homobasidiomycete Omphalotus olearius.</title>
        <authorList>
            <person name="Welzel K."/>
            <person name="Eisfeld K."/>
            <person name="Antelo L."/>
            <person name="Anke T."/>
            <person name="Anke H."/>
        </authorList>
    </citation>
    <scope>NUCLEOTIDE SEQUENCE [GENOMIC DNA]</scope>
    <scope>FUNCTION</scope>
    <scope>INDUCTION</scope>
    <scope>DOMAIN</scope>
    <source>
        <strain>TA90170</strain>
    </source>
</reference>
<reference key="2">
    <citation type="journal article" date="2006" name="ChemBioChem">
        <title>Nonribosomal peptide synthesis in Schizosaccharomyces pombe and the architectures of ferrichrome-type siderophore synthetases in fungi.</title>
        <authorList>
            <person name="Schwecke T."/>
            <person name="Goettling K."/>
            <person name="Durek P."/>
            <person name="Duenas I."/>
            <person name="Kaeufer N.F."/>
            <person name="Zock-Emmenthal S."/>
            <person name="Staub E."/>
            <person name="Neuhof T."/>
            <person name="Dieckmann R."/>
            <person name="von Doehren H."/>
        </authorList>
    </citation>
    <scope>DOMAIN</scope>
</reference>
<feature type="chain" id="PRO_0000444315" description="Nonribosomal peptide synthetase fso1">
    <location>
        <begin position="1"/>
        <end position="4547"/>
    </location>
</feature>
<feature type="domain" description="Carrier 1" evidence="3 7 8">
    <location>
        <begin position="737"/>
        <end position="812"/>
    </location>
</feature>
<feature type="domain" description="Carrier 2" evidence="3 7 8">
    <location>
        <begin position="1823"/>
        <end position="1899"/>
    </location>
</feature>
<feature type="domain" description="Carrier 3" evidence="3 7 8">
    <location>
        <begin position="2910"/>
        <end position="2986"/>
    </location>
</feature>
<feature type="domain" description="Carrier 4" evidence="3 7 8">
    <location>
        <begin position="3440"/>
        <end position="3516"/>
    </location>
</feature>
<feature type="domain" description="Carrier 5" evidence="3 7 8">
    <location>
        <begin position="3998"/>
        <end position="4074"/>
    </location>
</feature>
<feature type="region of interest" description="Adenylation 1" evidence="2 7 8">
    <location>
        <begin position="200"/>
        <end position="612"/>
    </location>
</feature>
<feature type="region of interest" description="Condensation 1" evidence="2 7 8">
    <location>
        <begin position="851"/>
        <end position="1259"/>
    </location>
</feature>
<feature type="region of interest" description="Adenylation 2" evidence="2 7 8">
    <location>
        <begin position="1295"/>
        <end position="1693"/>
    </location>
</feature>
<feature type="region of interest" description="Condensation 2" evidence="2 7 8">
    <location>
        <begin position="1930"/>
        <end position="2365"/>
    </location>
</feature>
<feature type="region of interest" description="Adenylation 3" evidence="2 7 8">
    <location>
        <begin position="2390"/>
        <end position="2769"/>
    </location>
</feature>
<feature type="region of interest" description="Condensation 3" evidence="2 7 8">
    <location>
        <begin position="3015"/>
        <end position="3429"/>
    </location>
</feature>
<feature type="region of interest" description="Condensation 4" evidence="2 7 8">
    <location>
        <begin position="3557"/>
        <end position="3967"/>
    </location>
</feature>
<feature type="region of interest" description="Condensation 5" evidence="2 7 8">
    <location>
        <begin position="4136"/>
        <end position="4461"/>
    </location>
</feature>
<feature type="modified residue" description="O-(pantetheine 4'-phosphoryl)serine" evidence="3">
    <location>
        <position position="772"/>
    </location>
</feature>
<feature type="modified residue" description="O-(pantetheine 4'-phosphoryl)serine" evidence="3">
    <location>
        <position position="1860"/>
    </location>
</feature>
<feature type="modified residue" description="O-(pantetheine 4'-phosphoryl)serine" evidence="3">
    <location>
        <position position="2947"/>
    </location>
</feature>
<feature type="modified residue" description="O-(pantetheine 4'-phosphoryl)serine" evidence="3">
    <location>
        <position position="3477"/>
    </location>
</feature>
<feature type="modified residue" description="O-(pantetheine 4'-phosphoryl)serine" evidence="3">
    <location>
        <position position="4035"/>
    </location>
</feature>
<protein>
    <recommendedName>
        <fullName evidence="5">Nonribosomal peptide synthetase fso1</fullName>
        <ecNumber evidence="7">6.3.2.-</ecNumber>
    </recommendedName>
    <alternativeName>
        <fullName evidence="5">Ferrichrome A biosynthesis cluster protein fso1</fullName>
    </alternativeName>
    <alternativeName>
        <fullName evidence="5">Ferrichrome A synthetase</fullName>
    </alternativeName>
</protein>
<gene>
    <name evidence="5" type="primary">fso1</name>
</gene>
<organism>
    <name type="scientific">Omphalotus olearius</name>
    <name type="common">Jack o'lantern</name>
    <dbReference type="NCBI Taxonomy" id="72120"/>
    <lineage>
        <taxon>Eukaryota</taxon>
        <taxon>Fungi</taxon>
        <taxon>Dikarya</taxon>
        <taxon>Basidiomycota</taxon>
        <taxon>Agaricomycotina</taxon>
        <taxon>Agaricomycetes</taxon>
        <taxon>Agaricomycetidae</taxon>
        <taxon>Agaricales</taxon>
        <taxon>Marasmiineae</taxon>
        <taxon>Omphalotaceae</taxon>
        <taxon>Omphalotus</taxon>
    </lineage>
</organism>
<dbReference type="EC" id="6.3.2.-" evidence="7"/>
<dbReference type="EMBL" id="AY929618">
    <property type="protein sequence ID" value="AAX49356.1"/>
    <property type="molecule type" value="Genomic_DNA"/>
</dbReference>
<dbReference type="SMR" id="Q52US9"/>
<dbReference type="UniPathway" id="UPA00783"/>
<dbReference type="GO" id="GO:0005737">
    <property type="term" value="C:cytoplasm"/>
    <property type="evidence" value="ECO:0007669"/>
    <property type="project" value="TreeGrafter"/>
</dbReference>
<dbReference type="GO" id="GO:0016874">
    <property type="term" value="F:ligase activity"/>
    <property type="evidence" value="ECO:0007669"/>
    <property type="project" value="UniProtKB-KW"/>
</dbReference>
<dbReference type="GO" id="GO:0031177">
    <property type="term" value="F:phosphopantetheine binding"/>
    <property type="evidence" value="ECO:0007669"/>
    <property type="project" value="InterPro"/>
</dbReference>
<dbReference type="GO" id="GO:0043041">
    <property type="term" value="P:amino acid activation for nonribosomal peptide biosynthetic process"/>
    <property type="evidence" value="ECO:0007669"/>
    <property type="project" value="TreeGrafter"/>
</dbReference>
<dbReference type="GO" id="GO:0031169">
    <property type="term" value="P:ferrichrome biosynthetic process"/>
    <property type="evidence" value="ECO:0007669"/>
    <property type="project" value="UniProtKB-UniPathway"/>
</dbReference>
<dbReference type="CDD" id="cd05918">
    <property type="entry name" value="A_NRPS_SidN3_like"/>
    <property type="match status" value="1"/>
</dbReference>
<dbReference type="FunFam" id="3.40.50.12780:FF:000024">
    <property type="entry name" value="Nonribosomal siderophore peptide synthase SidC"/>
    <property type="match status" value="1"/>
</dbReference>
<dbReference type="Gene3D" id="3.30.300.30">
    <property type="match status" value="2"/>
</dbReference>
<dbReference type="Gene3D" id="1.10.1200.10">
    <property type="entry name" value="ACP-like"/>
    <property type="match status" value="5"/>
</dbReference>
<dbReference type="Gene3D" id="3.30.559.10">
    <property type="entry name" value="Chloramphenicol acetyltransferase-like domain"/>
    <property type="match status" value="5"/>
</dbReference>
<dbReference type="Gene3D" id="3.40.50.12780">
    <property type="entry name" value="N-terminal domain of ligase-like"/>
    <property type="match status" value="3"/>
</dbReference>
<dbReference type="Gene3D" id="3.30.559.30">
    <property type="entry name" value="Nonribosomal peptide synthetase, condensation domain"/>
    <property type="match status" value="5"/>
</dbReference>
<dbReference type="InterPro" id="IPR010071">
    <property type="entry name" value="AA_adenyl_dom"/>
</dbReference>
<dbReference type="InterPro" id="IPR036736">
    <property type="entry name" value="ACP-like_sf"/>
</dbReference>
<dbReference type="InterPro" id="IPR045851">
    <property type="entry name" value="AMP-bd_C_sf"/>
</dbReference>
<dbReference type="InterPro" id="IPR020845">
    <property type="entry name" value="AMP-binding_CS"/>
</dbReference>
<dbReference type="InterPro" id="IPR000873">
    <property type="entry name" value="AMP-dep_synth/lig_dom"/>
</dbReference>
<dbReference type="InterPro" id="IPR042099">
    <property type="entry name" value="ANL_N_sf"/>
</dbReference>
<dbReference type="InterPro" id="IPR023213">
    <property type="entry name" value="CAT-like_dom_sf"/>
</dbReference>
<dbReference type="InterPro" id="IPR001242">
    <property type="entry name" value="Condensatn"/>
</dbReference>
<dbReference type="InterPro" id="IPR020806">
    <property type="entry name" value="PKS_PP-bd"/>
</dbReference>
<dbReference type="InterPro" id="IPR009081">
    <property type="entry name" value="PP-bd_ACP"/>
</dbReference>
<dbReference type="InterPro" id="IPR006162">
    <property type="entry name" value="Ppantetheine_attach_site"/>
</dbReference>
<dbReference type="NCBIfam" id="TIGR01733">
    <property type="entry name" value="AA-adenyl-dom"/>
    <property type="match status" value="1"/>
</dbReference>
<dbReference type="PANTHER" id="PTHR45527:SF2">
    <property type="entry name" value="FERRICROCIN SYNTHETASE (NONRIBOSOMAL PEPTIDE SIDEROPHORE SYNTHASE ) (EUROFUNG)"/>
    <property type="match status" value="1"/>
</dbReference>
<dbReference type="PANTHER" id="PTHR45527">
    <property type="entry name" value="NONRIBOSOMAL PEPTIDE SYNTHETASE"/>
    <property type="match status" value="1"/>
</dbReference>
<dbReference type="Pfam" id="PF00501">
    <property type="entry name" value="AMP-binding"/>
    <property type="match status" value="3"/>
</dbReference>
<dbReference type="Pfam" id="PF00668">
    <property type="entry name" value="Condensation"/>
    <property type="match status" value="5"/>
</dbReference>
<dbReference type="Pfam" id="PF00550">
    <property type="entry name" value="PP-binding"/>
    <property type="match status" value="5"/>
</dbReference>
<dbReference type="SMART" id="SM00823">
    <property type="entry name" value="PKS_PP"/>
    <property type="match status" value="4"/>
</dbReference>
<dbReference type="SUPFAM" id="SSF56801">
    <property type="entry name" value="Acetyl-CoA synthetase-like"/>
    <property type="match status" value="3"/>
</dbReference>
<dbReference type="SUPFAM" id="SSF47336">
    <property type="entry name" value="ACP-like"/>
    <property type="match status" value="5"/>
</dbReference>
<dbReference type="SUPFAM" id="SSF52777">
    <property type="entry name" value="CoA-dependent acyltransferases"/>
    <property type="match status" value="10"/>
</dbReference>
<dbReference type="PROSITE" id="PS00455">
    <property type="entry name" value="AMP_BINDING"/>
    <property type="match status" value="2"/>
</dbReference>
<dbReference type="PROSITE" id="PS50075">
    <property type="entry name" value="CARRIER"/>
    <property type="match status" value="5"/>
</dbReference>
<dbReference type="PROSITE" id="PS00012">
    <property type="entry name" value="PHOSPHOPANTETHEINE"/>
    <property type="match status" value="3"/>
</dbReference>
<accession>Q52US9</accession>
<proteinExistence type="evidence at transcript level"/>
<sequence>MSSLEGRFTLPATCIPCVFPRVISSTLNARLDVITINSPESKLDLVAFATVLRALLATSGEFSFGLGKNQFVVVESVDETEKEVEEKLSVHDASQVTGSENVQARIDSDALEIDGSVPSIVSSSQELVLFHLNAQPSSVSLVYSTDYIPDSLAKSLLELYFIKCAAKFDIGAISGALSIVNHPVQSVLSNRKPLLHAAFVERADETPDALAIDYLSAIDEYPLRKTLSYGDLDKYSLAVARILRGIVPSTEKAIVPLALPPSPELYIGYLATLRAGYAFCPLPGCDAAPVERIRELITDVSASVVLGLGSRPPWLADLGHIRWVDISLEADNFALKSASLVDGQDWVEPEADDLAYVLFTSGSTGKPKGVQITHLAAASSIAGHLAVRPLPPYTRWFQFAASTFDPSLMETFMNLSSGTTICAANRQRLLTDPESVLCELECTHMMATPSFAAMLRPERLGNTASKSFLEHGVKFELWTMGERLLEKVIAAFSRPDEGYVLCNAYGPTEAAINTTLRVHPRHETGARLGQPIPSATMVILHPTEPWLVPQGFPGELGLAGPQLARGYLNMPDQTARAFVLVDGIGRVYRTGDKARLVPDSNNEWTCVEYLGRMGLGQVKLSGRRVELGEIDVVMASVPGVQSAHAIVHQQSGNGAVQLVAFLTPDDEKLVEKVKAVVDARLPQHMRPSRYFLGESVPRSTSGKADRRAIGAVIASRIAQSDADNRTTDTEGEIVADREMLERIIKIVAETVDVLDNSAVTPISNLFDLGIDSLRGVRLLSLAREAGIQGLTIKDLLQNATPIALVNALCSRQNDADSSQYLDTLLRFTAEAAPAVRRELSLSDNDPLPPILPATPMQAGVLALYLRGGPASKGYINHSVYKLASGIDLDRFKDSWVHIVQRNDILHSRFVLVDNSATSPFAMVTLNDASVSWVERTGDDVEALVETYLKDIPSDFSLTSLKAFALLKNADGSDVRFVLSLHHSISDGASLALMLEELSLNYRGNDVSLRREGFEHSVKDALTADTDANTSYWKEQLEDFTPDAFPDLTGLRPSAKYTGHHVTTVISSMSFSNLLKTSRALKSTPLAVLQAAWASILLAYSESESPDIVFGSIVGGRSSEALEYTVGPVFTAVPVRVRNVSGVTTGDLLSTFVSNNVQGLVHRYPPVSVLSGSSGIIYDTTIALQHFGQEQSQTALWTAADYPAMETEFAVVLEVWPEEDDSIRLRATCSNHVLIPSASEAMLHQFDDILKFILENPAEAQFANVTDGVRQRLQSSINSHPQPFPVAPNTLIHHEFEQNARLHPDALAIWFKEDIEHPENDIRWTYRELNEKANRLAHLLASTYGNLCDRAIPLCMEKCPELYVAILGVLKAGAAWCPVDFAAPEMRKQNLFARAGGPVVLISSNTEFSHIKAALPGGLDIFSLDDPRLNDQPDSAPVIETTPSHLAYLIWTSGTTGLPKGVPIEHKAAVQSLKVLQREIPHNTAVRCLNFSAYTFDVSVLDVFYALGSACGTLCSSRKEILVGKFAEAVNAFEATQAFLTPAFMTQSSLDECRTLESLISIGEKLPDTVADKWCRPGTASLNTYGPAESTIIATYRRFTPNDSTKAHNVGLPIQTVSCFAMKEGRIVPRGAVGELALGGYQNARGYHRQPDMTAKKFIEHPTAGSIYLTGDIVRFLHDGTCEFVGRNDDLVKLGGIRVELSEISAALESCHPAVHEAVTIQLSRPDRPQKIVCTFVAAPGISGDKNICIGTDAVEIACAAKERAELSLPVFMHPNVVIIVKRLPHTASNKIDRKALGEYYCDLDIMAWENSLADHMGTGDIEATWSETELKIRDTVSELTGSPKEWISKTTHLPALGVDSIRALQLASRLRAIDVNISVQDILQHSTIRQLARQSETASSNLHNVISPWLEGFSSRWSPVVQRDFVEKVERVLPCAPLQEGMLGESVKNPEAYWSHRLFPLNKNIDLGRLSNAWNTATEHYEILRVVFMPAAAYASSNVMETDPNSVFLQVLLSRYEVPSTRQQIGRSEVYSMAREYARNIAISRSRSLQPRWSLIVLESTDGHSWMMFSMHHALYDAHAVTYLLADIQRRYHGISPSPQLQLTSALSRTFFANGPQESLDVWRDILTPFADRNALEWPTLTDGRSREDARFFSSAFERDYFSLTELATKAGGTAGHVLQAAWSIVSAAYLETDRVVFGETLSLRLEDHELQHAIAPLITTKPVAAHLKGTTTPRVLIRELADLTKLASLHRSIGFQHIRKILQRPINQPLFPSIFVIYFEEDSSVPSDIAENLWSSPHDVSSLGVEHPIAINVNVSGEKVVVNVLGNGAIMSESQVELLSQQFNAVLTRMLNEPDVPIMSLVSALDEMHLSIVKGASPMSQTHPLHWLEKFALTRPDAVAVSSYRSLSNEVPNEIWTYRALEEASNRVAHWIRRRYHSGIVAFCMPRSHTSIVYQLGIFKSGNIYLPIGEEIPAFRKRLIFRTSQTSLVFTTKALLHEFKSLDKNAIICVDDVQHLLEVSDSAITKPPLSIPETSCILVDDGHLCTSRASLVSSQNLISMVEGFVHEVYSSVLSLDENIFLSWMPSSADIHLIELFAPLRMGMKSASIPHQFLHQDASAVFHRTGASHSFLTTLGLNRRFETVDLPSVKCAIFTGIPSRAALLKEWRNGQGLMVLRAFGFPGLFTLGQYEYDLPMNIGKPVNSCTTLVLRQDSSAITLRGEAGELCIAEDILSPQYSKAHVFTDTVGYGRVHRTRHVGRVRADDTIDYNGPINIYRNNAGQVIDLTELSELLRSTSHLSIDVATFVFDHPEGIRNYIVSFVSRSSSADPLNGALPVVVVTDFAFTSNLLGHYKRHVSAHLVPDFIIPLDYLPLSSLATGRKHEARLKRVFHNFSLSALNQGSEKKRSARSLTAVEEEIRAILSKTTGIPVQTIDADSTTIELGIDSLSAISLSYQLKSAGYFVPPHVILSGPSVAKLGKSSKAIVESNTKVLSSWEVEDSIKKFVCEQLKVEVQSVLPCLPLQEGLIAHTLNSAKPIYVNHFVLRLDEADPMLLRAAFEETVKANDILRTCFVAANQNIVQAVLSETPEIWRSVSVESQEDLLSKLRHDMAGVEHDVVQNLGQKPPIRLGLYLSDSSPTYFCLTMHHAVYDGQSLSMLLSEVRDRYTGCFQIQRGSTSNFLNYLARQSQDASRAFYSDYLHNIPRPPVSPFVDDTLSSHHQSLKLDVSLSHLERISRSVNASLHSLALAAFGVATAEYRKRNDLVIGVVLSGRSVLVDGIETMLAPCITTVPVRVRTGKSEVFSDIAQRIHTEMSSLLAYQHTPLRLIQRWLGSSEPLFDTLFSFNRMTTGSSSSTLWSSVESKAALDYPFALAIDADSTSDSLVIRAGHIPSFGSKATVKTIMLRVAELLANLDTRIDLLVSHKLLETQEDSPMYDSSAWSQEEILIRNNVAEVCNVDRNLVTKDISFLHLGIDSITSIRLAQQLRNAGLAIPTFAIMRHPCVGALAEYLKDNPMVSTSAIALRELNEIQEVLRKEYGDSIPRLAAEDEILSLFPATPLQTGMLSQTIYSGGRLYMVHHSLQLDINTVSLERLRNAWEVVVASTDILRCSFHVCPSGDYPWLAAIHSKTPLRWKEYDVPSTSVLRLIAFQIENTELIKDESGFATPPLSLHLINSPDMCVLIISMHHCLYDGLSLAYILEDVTAAYFGHEAVRRPQFTDAVPFVLYSSKDRAHFWQKRLSGFSASPIPKRQPEGHSPNLASQFVDLPDGSLDAIKEMGVLVQATALLAWGKTLAALTGSLDVVFGQVVAGRAIELDNALLVNGPLFNTVPFRFTISDPSWSNAEGVQAQHAFNIAAEPHSHVPLRTIQAEWRSQNMSRDTLFDTLFVFQQGKGPSMSSLWTRFNVSDDASASQYPLSLEIIHTNNKIELRAGCQAGIMSQTELQDLLRLLHDTLLDIVVHPTANILDQSPSLKDLHTVPQHRAPSAQEGHSKSPGRALTVNEETLRDVFSSVTKIPKDQIGLETPLYALGLDSVGAIQVAAKCRIDGLNITVVDIFAGETIAGICKAYETRDIPETGTLLEPSELVSSNIRDKALALLNLEQESVQEVLPVLAGQSYHLGAWLACGGISYEPVFAYRAAVPLDPERLRKAWNALRSQHGILRTSFAATSPDEVVQVVLKQLPDSDPSWSFVEVEGDFDQRVREQARIEYSRPSTLFRPPARARLVRVGNQDALLLVFHHATYDAWSIPLLVRDLCALYDGLHCKSTSNFTGLVQYLHTTSDKGSQATFWRDSLDADSGVRPTILPTTSPSSGLKQVFVRVPGVVSSVDQLSNRCQTAGVGLQALVLAVWGRVCQNLIRSTSAPILGVYHTGRAASFDGLGELAGPTVNVLPMRVPVASPGKIWDVAKQIQRDLGRRTAFEHSSLREIMSHVGHKNGPLFNVFVNLLWHGDKIRTIRQDSLLSSLSIGPPTDYAPDKPFALKSSVNALDHSHLPKFGLYIDVVLDSKDQSLAVAARCHEALLNKEQLRSVVDSFGDGVVDAIGELE</sequence>